<keyword id="KW-1003">Cell membrane</keyword>
<keyword id="KW-0472">Membrane</keyword>
<keyword id="KW-0479">Metal-binding</keyword>
<keyword id="KW-0813">Transport</keyword>
<keyword id="KW-0862">Zinc</keyword>
<accession>Q6GC36</accession>
<sequence>MTTQLNINSVIENAKRVITPLSPISIFAARNPWEGLEADTFEDVAKWLRDVRDVDIFPNKALIESAVARGELDESVFNQLVTDMLLEHHYNIPQHYINLYIDNIKTLKDVPASYMNHSNVDVVADLLLEKSKRDMADSYHHYDVRPMSDAIIDEQGEPLSEQVNRQMIKWTKLYIDQFLSSWTMPKREQSFYHAWLHLAQHDHSFTKAQRQVIKGLPNDPKMTIESVLTHFSIDQEDYQAYVEGHLLALPGWAGMLYYRSQQHHFEQHLLTDYLAIRLVVEQLLVGDEFKSVTKDCESRSENWFKQTVASWCYYSDMPSDVLLQHDVNEIQTFIHFAATMNKNVFKNLWLIAWEMTYESQLKQKIKAGHESVAGALDVNQVNVSENDNANQPHSVLLNDTQAVDENNSELNQVGTSTKAQIAFCIDVRSEPFRRHIEAAGPFETIGIAGFFGLPIQKDAVDEQFKHDSLPVMVPPAYRIKEFADRYDMNVYRQQQQTMSSMFYTFKLMKNNVMPSLLLPELSGPFLSLSTIVNSIMPRKSRASLQKITQKWLKKPETKLTIDREFDRTSDLPVGFTEQEQIDFALQALKLMDLTEAFAPFVVLAGHASHSHNNPHHASLECGACGGASSGFNAKLLAMICNRPNVRQGLKQSGVYIPETTVFAAAEHHTSTDTLAWVYVPDTLSSIALDAYESLNDAMPMISEHANRERLDKLPTIGRVNHPVEEAQRFASDWSEVRPEWGLAKNASFIIGRRQLTKGIDLEGRTFLHNYDWRKDKDGKLLNTIISGPALVAQWINLQYYASTVAPHFYGSGNKATQTVTSGVGVMQGNASDLMYGLSWQSVMAADRTMYHSPIRLLVVVQAPDYVVARLLANNDHFARKVSNHWLRLMSVNEEGRFKSWI</sequence>
<protein>
    <recommendedName>
        <fullName evidence="1">Probable inorganic carbon transporter subunit DabA</fullName>
    </recommendedName>
</protein>
<evidence type="ECO:0000255" key="1">
    <source>
        <dbReference type="HAMAP-Rule" id="MF_01871"/>
    </source>
</evidence>
<feature type="chain" id="PRO_0000387307" description="Probable inorganic carbon transporter subunit DabA">
    <location>
        <begin position="1"/>
        <end position="901"/>
    </location>
</feature>
<feature type="binding site" evidence="1">
    <location>
        <position position="424"/>
    </location>
    <ligand>
        <name>Zn(2+)</name>
        <dbReference type="ChEBI" id="CHEBI:29105"/>
    </ligand>
</feature>
<feature type="binding site" evidence="1">
    <location>
        <position position="426"/>
    </location>
    <ligand>
        <name>Zn(2+)</name>
        <dbReference type="ChEBI" id="CHEBI:29105"/>
    </ligand>
</feature>
<feature type="binding site" evidence="1">
    <location>
        <position position="606"/>
    </location>
    <ligand>
        <name>Zn(2+)</name>
        <dbReference type="ChEBI" id="CHEBI:29105"/>
    </ligand>
</feature>
<feature type="binding site" evidence="1">
    <location>
        <position position="621"/>
    </location>
    <ligand>
        <name>Zn(2+)</name>
        <dbReference type="ChEBI" id="CHEBI:29105"/>
    </ligand>
</feature>
<dbReference type="EMBL" id="BX571857">
    <property type="protein sequence ID" value="CAG42184.1"/>
    <property type="molecule type" value="Genomic_DNA"/>
</dbReference>
<dbReference type="RefSeq" id="WP_000211536.1">
    <property type="nucleotide sequence ID" value="NC_002953.3"/>
</dbReference>
<dbReference type="KEGG" id="sas:SAS0411"/>
<dbReference type="HOGENOM" id="CLU_009885_0_0_9"/>
<dbReference type="GO" id="GO:0005886">
    <property type="term" value="C:plasma membrane"/>
    <property type="evidence" value="ECO:0007669"/>
    <property type="project" value="UniProtKB-SubCell"/>
</dbReference>
<dbReference type="GO" id="GO:0008270">
    <property type="term" value="F:zinc ion binding"/>
    <property type="evidence" value="ECO:0007669"/>
    <property type="project" value="UniProtKB-UniRule"/>
</dbReference>
<dbReference type="HAMAP" id="MF_01871">
    <property type="entry name" value="DabA"/>
    <property type="match status" value="1"/>
</dbReference>
<dbReference type="InterPro" id="IPR018752">
    <property type="entry name" value="DabA"/>
</dbReference>
<dbReference type="PANTHER" id="PTHR38344:SF1">
    <property type="entry name" value="INORGANIC CARBON TRANSPORTER SUBUNIT DABA-RELATED"/>
    <property type="match status" value="1"/>
</dbReference>
<dbReference type="PANTHER" id="PTHR38344">
    <property type="entry name" value="UPF0753 PROTEIN AQ_863"/>
    <property type="match status" value="1"/>
</dbReference>
<dbReference type="Pfam" id="PF10070">
    <property type="entry name" value="DabA"/>
    <property type="match status" value="1"/>
</dbReference>
<proteinExistence type="inferred from homology"/>
<gene>
    <name evidence="1" type="primary">dabA</name>
    <name type="ordered locus">SAS0411</name>
</gene>
<comment type="function">
    <text evidence="1">Part of an energy-coupled inorganic carbon pump.</text>
</comment>
<comment type="cofactor">
    <cofactor evidence="1">
        <name>Zn(2+)</name>
        <dbReference type="ChEBI" id="CHEBI:29105"/>
    </cofactor>
</comment>
<comment type="subunit">
    <text evidence="1">Forms a complex with DabB.</text>
</comment>
<comment type="subcellular location">
    <subcellularLocation>
        <location evidence="1">Cell membrane</location>
        <topology evidence="1">Peripheral membrane protein</topology>
    </subcellularLocation>
</comment>
<comment type="similarity">
    <text evidence="1">Belongs to the inorganic carbon transporter (TC 9.A.2) DabA family.</text>
</comment>
<name>DABA_STAAS</name>
<reference key="1">
    <citation type="journal article" date="2004" name="Proc. Natl. Acad. Sci. U.S.A.">
        <title>Complete genomes of two clinical Staphylococcus aureus strains: evidence for the rapid evolution of virulence and drug resistance.</title>
        <authorList>
            <person name="Holden M.T.G."/>
            <person name="Feil E.J."/>
            <person name="Lindsay J.A."/>
            <person name="Peacock S.J."/>
            <person name="Day N.P.J."/>
            <person name="Enright M.C."/>
            <person name="Foster T.J."/>
            <person name="Moore C.E."/>
            <person name="Hurst L."/>
            <person name="Atkin R."/>
            <person name="Barron A."/>
            <person name="Bason N."/>
            <person name="Bentley S.D."/>
            <person name="Chillingworth C."/>
            <person name="Chillingworth T."/>
            <person name="Churcher C."/>
            <person name="Clark L."/>
            <person name="Corton C."/>
            <person name="Cronin A."/>
            <person name="Doggett J."/>
            <person name="Dowd L."/>
            <person name="Feltwell T."/>
            <person name="Hance Z."/>
            <person name="Harris B."/>
            <person name="Hauser H."/>
            <person name="Holroyd S."/>
            <person name="Jagels K."/>
            <person name="James K.D."/>
            <person name="Lennard N."/>
            <person name="Line A."/>
            <person name="Mayes R."/>
            <person name="Moule S."/>
            <person name="Mungall K."/>
            <person name="Ormond D."/>
            <person name="Quail M.A."/>
            <person name="Rabbinowitsch E."/>
            <person name="Rutherford K.M."/>
            <person name="Sanders M."/>
            <person name="Sharp S."/>
            <person name="Simmonds M."/>
            <person name="Stevens K."/>
            <person name="Whitehead S."/>
            <person name="Barrell B.G."/>
            <person name="Spratt B.G."/>
            <person name="Parkhill J."/>
        </authorList>
    </citation>
    <scope>NUCLEOTIDE SEQUENCE [LARGE SCALE GENOMIC DNA]</scope>
    <source>
        <strain>MSSA476</strain>
    </source>
</reference>
<organism>
    <name type="scientific">Staphylococcus aureus (strain MSSA476)</name>
    <dbReference type="NCBI Taxonomy" id="282459"/>
    <lineage>
        <taxon>Bacteria</taxon>
        <taxon>Bacillati</taxon>
        <taxon>Bacillota</taxon>
        <taxon>Bacilli</taxon>
        <taxon>Bacillales</taxon>
        <taxon>Staphylococcaceae</taxon>
        <taxon>Staphylococcus</taxon>
    </lineage>
</organism>